<name>RS24_METM7</name>
<feature type="chain" id="PRO_1000017743" description="Small ribosomal subunit protein eS24">
    <location>
        <begin position="1"/>
        <end position="102"/>
    </location>
</feature>
<reference key="1">
    <citation type="submission" date="2007-06" db="EMBL/GenBank/DDBJ databases">
        <title>Complete sequence of Methanococcus maripaludis C7.</title>
        <authorList>
            <consortium name="US DOE Joint Genome Institute"/>
            <person name="Copeland A."/>
            <person name="Lucas S."/>
            <person name="Lapidus A."/>
            <person name="Barry K."/>
            <person name="Glavina del Rio T."/>
            <person name="Dalin E."/>
            <person name="Tice H."/>
            <person name="Pitluck S."/>
            <person name="Clum A."/>
            <person name="Schmutz J."/>
            <person name="Larimer F."/>
            <person name="Land M."/>
            <person name="Hauser L."/>
            <person name="Kyrpides N."/>
            <person name="Anderson I."/>
            <person name="Sieprawska-Lupa M."/>
            <person name="Whitman W.B."/>
            <person name="Richardson P."/>
        </authorList>
    </citation>
    <scope>NUCLEOTIDE SEQUENCE [LARGE SCALE GENOMIC DNA]</scope>
    <source>
        <strain>C7 / ATCC BAA-1331</strain>
    </source>
</reference>
<protein>
    <recommendedName>
        <fullName evidence="1">Small ribosomal subunit protein eS24</fullName>
    </recommendedName>
    <alternativeName>
        <fullName evidence="2">30S ribosomal protein S24e</fullName>
    </alternativeName>
</protein>
<sequence>MDISIISDKNNPLLYRREIKFTVSFDAATPSIKDVKMKLVAVLNADKKVLVVDTLDQIFGKLEAEGYAKIYNDEKAMATIETKSVLEKNKIEEEAEAEVAEE</sequence>
<organism>
    <name type="scientific">Methanococcus maripaludis (strain C7 / ATCC BAA-1331)</name>
    <dbReference type="NCBI Taxonomy" id="426368"/>
    <lineage>
        <taxon>Archaea</taxon>
        <taxon>Methanobacteriati</taxon>
        <taxon>Methanobacteriota</taxon>
        <taxon>Methanomada group</taxon>
        <taxon>Methanococci</taxon>
        <taxon>Methanococcales</taxon>
        <taxon>Methanococcaceae</taxon>
        <taxon>Methanococcus</taxon>
    </lineage>
</organism>
<proteinExistence type="inferred from homology"/>
<evidence type="ECO:0000255" key="1">
    <source>
        <dbReference type="HAMAP-Rule" id="MF_00545"/>
    </source>
</evidence>
<evidence type="ECO:0000305" key="2"/>
<gene>
    <name evidence="1" type="primary">rps24e</name>
    <name type="ordered locus">MmarC7_1440</name>
</gene>
<keyword id="KW-0687">Ribonucleoprotein</keyword>
<keyword id="KW-0689">Ribosomal protein</keyword>
<comment type="similarity">
    <text evidence="1">Belongs to the eukaryotic ribosomal protein eS24 family.</text>
</comment>
<dbReference type="EMBL" id="CP000745">
    <property type="protein sequence ID" value="ABR66503.1"/>
    <property type="molecule type" value="Genomic_DNA"/>
</dbReference>
<dbReference type="SMR" id="A6VJ77"/>
<dbReference type="STRING" id="426368.MmarC7_1440"/>
<dbReference type="KEGG" id="mmz:MmarC7_1440"/>
<dbReference type="eggNOG" id="arCOG04182">
    <property type="taxonomic scope" value="Archaea"/>
</dbReference>
<dbReference type="HOGENOM" id="CLU_107248_3_1_2"/>
<dbReference type="OrthoDB" id="27533at2157"/>
<dbReference type="GO" id="GO:1990904">
    <property type="term" value="C:ribonucleoprotein complex"/>
    <property type="evidence" value="ECO:0007669"/>
    <property type="project" value="UniProtKB-KW"/>
</dbReference>
<dbReference type="GO" id="GO:0005840">
    <property type="term" value="C:ribosome"/>
    <property type="evidence" value="ECO:0007669"/>
    <property type="project" value="UniProtKB-KW"/>
</dbReference>
<dbReference type="GO" id="GO:0003735">
    <property type="term" value="F:structural constituent of ribosome"/>
    <property type="evidence" value="ECO:0007669"/>
    <property type="project" value="InterPro"/>
</dbReference>
<dbReference type="GO" id="GO:0006412">
    <property type="term" value="P:translation"/>
    <property type="evidence" value="ECO:0007669"/>
    <property type="project" value="UniProtKB-UniRule"/>
</dbReference>
<dbReference type="Gene3D" id="3.30.70.330">
    <property type="match status" value="1"/>
</dbReference>
<dbReference type="HAMAP" id="MF_00545">
    <property type="entry name" value="Ribosomal_eS24"/>
    <property type="match status" value="1"/>
</dbReference>
<dbReference type="InterPro" id="IPR012677">
    <property type="entry name" value="Nucleotide-bd_a/b_plait_sf"/>
</dbReference>
<dbReference type="InterPro" id="IPR001976">
    <property type="entry name" value="Ribosomal_eS24"/>
</dbReference>
<dbReference type="InterPro" id="IPR018098">
    <property type="entry name" value="Ribosomal_eS24_CS"/>
</dbReference>
<dbReference type="InterPro" id="IPR012678">
    <property type="entry name" value="Ribosomal_uL23/eL15/eS24_sf"/>
</dbReference>
<dbReference type="Pfam" id="PF01282">
    <property type="entry name" value="Ribosomal_S24e"/>
    <property type="match status" value="1"/>
</dbReference>
<dbReference type="SUPFAM" id="SSF54189">
    <property type="entry name" value="Ribosomal proteins S24e, L23 and L15e"/>
    <property type="match status" value="1"/>
</dbReference>
<dbReference type="PROSITE" id="PS00529">
    <property type="entry name" value="RIBOSOMAL_S24E"/>
    <property type="match status" value="1"/>
</dbReference>
<accession>A6VJ77</accession>